<comment type="function">
    <text evidence="1">Catalyzes the attachment of proline to tRNA(Pro) in a two-step reaction: proline is first activated by ATP to form Pro-AMP and then transferred to the acceptor end of tRNA(Pro). As ProRS can inadvertently accommodate and process non-cognate amino acids such as alanine and cysteine, to avoid such errors it has two additional distinct editing activities against alanine. One activity is designated as 'pretransfer' editing and involves the tRNA(Pro)-independent hydrolysis of activated Ala-AMP. The other activity is designated 'posttransfer' editing and involves deacylation of mischarged Ala-tRNA(Pro). The misacylated Cys-tRNA(Pro) is not edited by ProRS.</text>
</comment>
<comment type="catalytic activity">
    <reaction evidence="1">
        <text>tRNA(Pro) + L-proline + ATP = L-prolyl-tRNA(Pro) + AMP + diphosphate</text>
        <dbReference type="Rhea" id="RHEA:14305"/>
        <dbReference type="Rhea" id="RHEA-COMP:9700"/>
        <dbReference type="Rhea" id="RHEA-COMP:9702"/>
        <dbReference type="ChEBI" id="CHEBI:30616"/>
        <dbReference type="ChEBI" id="CHEBI:33019"/>
        <dbReference type="ChEBI" id="CHEBI:60039"/>
        <dbReference type="ChEBI" id="CHEBI:78442"/>
        <dbReference type="ChEBI" id="CHEBI:78532"/>
        <dbReference type="ChEBI" id="CHEBI:456215"/>
        <dbReference type="EC" id="6.1.1.15"/>
    </reaction>
</comment>
<comment type="subunit">
    <text evidence="1">Homodimer.</text>
</comment>
<comment type="subcellular location">
    <subcellularLocation>
        <location evidence="1">Cytoplasm</location>
    </subcellularLocation>
</comment>
<comment type="domain">
    <text evidence="1">Consists of three domains: the N-terminal catalytic domain, the editing domain and the C-terminal anticodon-binding domain.</text>
</comment>
<comment type="similarity">
    <text evidence="1">Belongs to the class-II aminoacyl-tRNA synthetase family. ProS type 1 subfamily.</text>
</comment>
<feature type="chain" id="PRO_1000087843" description="Proline--tRNA ligase">
    <location>
        <begin position="1"/>
        <end position="574"/>
    </location>
</feature>
<accession>A6VXT1</accession>
<organism>
    <name type="scientific">Marinomonas sp. (strain MWYL1)</name>
    <dbReference type="NCBI Taxonomy" id="400668"/>
    <lineage>
        <taxon>Bacteria</taxon>
        <taxon>Pseudomonadati</taxon>
        <taxon>Pseudomonadota</taxon>
        <taxon>Gammaproteobacteria</taxon>
        <taxon>Oceanospirillales</taxon>
        <taxon>Oceanospirillaceae</taxon>
        <taxon>Marinomonas</taxon>
    </lineage>
</organism>
<evidence type="ECO:0000255" key="1">
    <source>
        <dbReference type="HAMAP-Rule" id="MF_01569"/>
    </source>
</evidence>
<reference key="1">
    <citation type="submission" date="2007-06" db="EMBL/GenBank/DDBJ databases">
        <title>Complete sequence of Marinomonas sp. MWYL1.</title>
        <authorList>
            <consortium name="US DOE Joint Genome Institute"/>
            <person name="Copeland A."/>
            <person name="Lucas S."/>
            <person name="Lapidus A."/>
            <person name="Barry K."/>
            <person name="Glavina del Rio T."/>
            <person name="Dalin E."/>
            <person name="Tice H."/>
            <person name="Pitluck S."/>
            <person name="Kiss H."/>
            <person name="Brettin T."/>
            <person name="Bruce D."/>
            <person name="Detter J.C."/>
            <person name="Han C."/>
            <person name="Schmutz J."/>
            <person name="Larimer F."/>
            <person name="Land M."/>
            <person name="Hauser L."/>
            <person name="Kyrpides N."/>
            <person name="Kim E."/>
            <person name="Johnston A.W.B."/>
            <person name="Todd J.D."/>
            <person name="Rogers R."/>
            <person name="Wexler M."/>
            <person name="Bond P.L."/>
            <person name="Li Y."/>
            <person name="Richardson P."/>
        </authorList>
    </citation>
    <scope>NUCLEOTIDE SEQUENCE [LARGE SCALE GENOMIC DNA]</scope>
    <source>
        <strain>MWYL1</strain>
    </source>
</reference>
<sequence>MRASNYLFSTLRDAPTDAVVTSHQLMIRAGMIRQVSKGLYTWLPTGLKVFRKIENIVRDEMEKAGSLEVMMPGVQPAELWQETGRWQKYGPELLRLQDRHGREYCLGPTHEEVITELARNELTSYKQLPMNFFQIQTKFRDEVRPRFGVMRSREFCMKDAYSFHVGAESLQETYDIMHKAYCNVFDRIGLNYRPVRADTGSIGGAYSHEFHVLADSGEDDIAFSDSSDFAANIELAEAICLKEKADAPTQDITEVFTPDCKTIAKVAEFLKLDVTSTVKTMLIKAVDENDQPTIAALVLRGDHNINEIKVEKLAGVVIPFEFADEADIIAKTGCAPGSIGPKGLAEKGIRVIADRSAAVMSDFCAGANKDDYHFTGLNWERDCAEFEVADIRNVVEGDPSPDGQGTIVIKRGIEVGHIFQLGQQYAEALKATVLDENGKAQVMHMGCYGIGVSRIVAAAIEQNFDEKGILWPESIAPFDIAIVAMNYDKSEAVRTECDRLYAELKAKGLDVLLDDRKERPGVKFADCELLGIPHRLVVGDKGLEKGTLEYKYRKAGDNEDIAIADAVEFILSKK</sequence>
<proteinExistence type="inferred from homology"/>
<gene>
    <name evidence="1" type="primary">proS</name>
    <name type="ordered locus">Mmwyl1_2338</name>
</gene>
<keyword id="KW-0030">Aminoacyl-tRNA synthetase</keyword>
<keyword id="KW-0067">ATP-binding</keyword>
<keyword id="KW-0963">Cytoplasm</keyword>
<keyword id="KW-0436">Ligase</keyword>
<keyword id="KW-0547">Nucleotide-binding</keyword>
<keyword id="KW-0648">Protein biosynthesis</keyword>
<dbReference type="EC" id="6.1.1.15" evidence="1"/>
<dbReference type="EMBL" id="CP000749">
    <property type="protein sequence ID" value="ABR71260.1"/>
    <property type="molecule type" value="Genomic_DNA"/>
</dbReference>
<dbReference type="SMR" id="A6VXT1"/>
<dbReference type="STRING" id="400668.Mmwyl1_2338"/>
<dbReference type="KEGG" id="mmw:Mmwyl1_2338"/>
<dbReference type="eggNOG" id="COG0442">
    <property type="taxonomic scope" value="Bacteria"/>
</dbReference>
<dbReference type="HOGENOM" id="CLU_016739_0_0_6"/>
<dbReference type="OrthoDB" id="9809052at2"/>
<dbReference type="GO" id="GO:0005829">
    <property type="term" value="C:cytosol"/>
    <property type="evidence" value="ECO:0007669"/>
    <property type="project" value="TreeGrafter"/>
</dbReference>
<dbReference type="GO" id="GO:0002161">
    <property type="term" value="F:aminoacyl-tRNA deacylase activity"/>
    <property type="evidence" value="ECO:0007669"/>
    <property type="project" value="InterPro"/>
</dbReference>
<dbReference type="GO" id="GO:0005524">
    <property type="term" value="F:ATP binding"/>
    <property type="evidence" value="ECO:0007669"/>
    <property type="project" value="UniProtKB-UniRule"/>
</dbReference>
<dbReference type="GO" id="GO:0004827">
    <property type="term" value="F:proline-tRNA ligase activity"/>
    <property type="evidence" value="ECO:0007669"/>
    <property type="project" value="UniProtKB-UniRule"/>
</dbReference>
<dbReference type="GO" id="GO:0006433">
    <property type="term" value="P:prolyl-tRNA aminoacylation"/>
    <property type="evidence" value="ECO:0007669"/>
    <property type="project" value="UniProtKB-UniRule"/>
</dbReference>
<dbReference type="CDD" id="cd04334">
    <property type="entry name" value="ProRS-INS"/>
    <property type="match status" value="1"/>
</dbReference>
<dbReference type="CDD" id="cd00861">
    <property type="entry name" value="ProRS_anticodon_short"/>
    <property type="match status" value="1"/>
</dbReference>
<dbReference type="CDD" id="cd00779">
    <property type="entry name" value="ProRS_core_prok"/>
    <property type="match status" value="1"/>
</dbReference>
<dbReference type="FunFam" id="3.30.930.10:FF:000043">
    <property type="entry name" value="Proline--tRNA ligase"/>
    <property type="match status" value="1"/>
</dbReference>
<dbReference type="FunFam" id="3.30.930.10:FF:000097">
    <property type="entry name" value="Proline--tRNA ligase"/>
    <property type="match status" value="1"/>
</dbReference>
<dbReference type="Gene3D" id="3.40.50.800">
    <property type="entry name" value="Anticodon-binding domain"/>
    <property type="match status" value="1"/>
</dbReference>
<dbReference type="Gene3D" id="3.30.930.10">
    <property type="entry name" value="Bira Bifunctional Protein, Domain 2"/>
    <property type="match status" value="2"/>
</dbReference>
<dbReference type="Gene3D" id="3.90.960.10">
    <property type="entry name" value="YbaK/aminoacyl-tRNA synthetase-associated domain"/>
    <property type="match status" value="1"/>
</dbReference>
<dbReference type="HAMAP" id="MF_01569">
    <property type="entry name" value="Pro_tRNA_synth_type1"/>
    <property type="match status" value="1"/>
</dbReference>
<dbReference type="InterPro" id="IPR002314">
    <property type="entry name" value="aa-tRNA-synt_IIb"/>
</dbReference>
<dbReference type="InterPro" id="IPR006195">
    <property type="entry name" value="aa-tRNA-synth_II"/>
</dbReference>
<dbReference type="InterPro" id="IPR045864">
    <property type="entry name" value="aa-tRNA-synth_II/BPL/LPL"/>
</dbReference>
<dbReference type="InterPro" id="IPR004154">
    <property type="entry name" value="Anticodon-bd"/>
</dbReference>
<dbReference type="InterPro" id="IPR036621">
    <property type="entry name" value="Anticodon-bd_dom_sf"/>
</dbReference>
<dbReference type="InterPro" id="IPR002316">
    <property type="entry name" value="Pro-tRNA-ligase_IIa"/>
</dbReference>
<dbReference type="InterPro" id="IPR004500">
    <property type="entry name" value="Pro-tRNA-synth_IIa_bac-type"/>
</dbReference>
<dbReference type="InterPro" id="IPR023717">
    <property type="entry name" value="Pro-tRNA-Synthase_IIa_type1"/>
</dbReference>
<dbReference type="InterPro" id="IPR050062">
    <property type="entry name" value="Pro-tRNA_synthetase"/>
</dbReference>
<dbReference type="InterPro" id="IPR044140">
    <property type="entry name" value="ProRS_anticodon_short"/>
</dbReference>
<dbReference type="InterPro" id="IPR033730">
    <property type="entry name" value="ProRS_core_prok"/>
</dbReference>
<dbReference type="InterPro" id="IPR036754">
    <property type="entry name" value="YbaK/aa-tRNA-synt-asso_dom_sf"/>
</dbReference>
<dbReference type="InterPro" id="IPR007214">
    <property type="entry name" value="YbaK/aa-tRNA-synth-assoc-dom"/>
</dbReference>
<dbReference type="NCBIfam" id="NF006625">
    <property type="entry name" value="PRK09194.1"/>
    <property type="match status" value="1"/>
</dbReference>
<dbReference type="NCBIfam" id="TIGR00409">
    <property type="entry name" value="proS_fam_II"/>
    <property type="match status" value="1"/>
</dbReference>
<dbReference type="PANTHER" id="PTHR42753">
    <property type="entry name" value="MITOCHONDRIAL RIBOSOME PROTEIN L39/PROLYL-TRNA LIGASE FAMILY MEMBER"/>
    <property type="match status" value="1"/>
</dbReference>
<dbReference type="PANTHER" id="PTHR42753:SF2">
    <property type="entry name" value="PROLINE--TRNA LIGASE"/>
    <property type="match status" value="1"/>
</dbReference>
<dbReference type="Pfam" id="PF03129">
    <property type="entry name" value="HGTP_anticodon"/>
    <property type="match status" value="1"/>
</dbReference>
<dbReference type="Pfam" id="PF00587">
    <property type="entry name" value="tRNA-synt_2b"/>
    <property type="match status" value="1"/>
</dbReference>
<dbReference type="Pfam" id="PF04073">
    <property type="entry name" value="tRNA_edit"/>
    <property type="match status" value="1"/>
</dbReference>
<dbReference type="PIRSF" id="PIRSF001535">
    <property type="entry name" value="ProRS_1"/>
    <property type="match status" value="1"/>
</dbReference>
<dbReference type="PRINTS" id="PR01046">
    <property type="entry name" value="TRNASYNTHPRO"/>
</dbReference>
<dbReference type="SUPFAM" id="SSF52954">
    <property type="entry name" value="Class II aaRS ABD-related"/>
    <property type="match status" value="1"/>
</dbReference>
<dbReference type="SUPFAM" id="SSF55681">
    <property type="entry name" value="Class II aaRS and biotin synthetases"/>
    <property type="match status" value="1"/>
</dbReference>
<dbReference type="SUPFAM" id="SSF55826">
    <property type="entry name" value="YbaK/ProRS associated domain"/>
    <property type="match status" value="1"/>
</dbReference>
<dbReference type="PROSITE" id="PS50862">
    <property type="entry name" value="AA_TRNA_LIGASE_II"/>
    <property type="match status" value="1"/>
</dbReference>
<name>SYP_MARMS</name>
<protein>
    <recommendedName>
        <fullName evidence="1">Proline--tRNA ligase</fullName>
        <ecNumber evidence="1">6.1.1.15</ecNumber>
    </recommendedName>
    <alternativeName>
        <fullName evidence="1">Prolyl-tRNA synthetase</fullName>
        <shortName evidence="1">ProRS</shortName>
    </alternativeName>
</protein>